<gene>
    <name evidence="1" type="primary">yebF</name>
    <name type="ordered locus">SeAg_B1243</name>
</gene>
<dbReference type="EMBL" id="CP001138">
    <property type="protein sequence ID" value="ACH50316.1"/>
    <property type="molecule type" value="Genomic_DNA"/>
</dbReference>
<dbReference type="RefSeq" id="WP_001042123.1">
    <property type="nucleotide sequence ID" value="NC_011149.1"/>
</dbReference>
<dbReference type="SMR" id="B5F3L0"/>
<dbReference type="KEGG" id="sea:SeAg_B1243"/>
<dbReference type="HOGENOM" id="CLU_161319_1_0_6"/>
<dbReference type="Proteomes" id="UP000008819">
    <property type="component" value="Chromosome"/>
</dbReference>
<dbReference type="GO" id="GO:0005576">
    <property type="term" value="C:extracellular region"/>
    <property type="evidence" value="ECO:0007669"/>
    <property type="project" value="UniProtKB-SubCell"/>
</dbReference>
<dbReference type="Gene3D" id="3.10.450.300">
    <property type="entry name" value="YebF/Colicin-M immunity protein"/>
    <property type="match status" value="1"/>
</dbReference>
<dbReference type="HAMAP" id="MF_01435">
    <property type="entry name" value="YebF"/>
    <property type="match status" value="1"/>
</dbReference>
<dbReference type="InterPro" id="IPR020236">
    <property type="entry name" value="Uncharacterised_YebF"/>
</dbReference>
<dbReference type="InterPro" id="IPR038703">
    <property type="entry name" value="YebF/Cmi_sf"/>
</dbReference>
<dbReference type="InterPro" id="IPR025603">
    <property type="entry name" value="YebF/ColM_immunity"/>
</dbReference>
<dbReference type="NCBIfam" id="NF010224">
    <property type="entry name" value="PRK13680.1"/>
    <property type="match status" value="1"/>
</dbReference>
<dbReference type="NCBIfam" id="NF041240">
    <property type="entry name" value="YebF_not_Cmi"/>
    <property type="match status" value="1"/>
</dbReference>
<dbReference type="Pfam" id="PF13995">
    <property type="entry name" value="YebF"/>
    <property type="match status" value="1"/>
</dbReference>
<dbReference type="PROSITE" id="PS51979">
    <property type="entry name" value="YEBF_CMI"/>
    <property type="match status" value="1"/>
</dbReference>
<sequence>MNKRGALLSLLLLSASVSAFAASTESKSVKFPQCEGLDAAGIAASVKRDYQQNRIVRWADDQKKVGQADPVAWVNVQDVVGQNDKWTVPLTVRGKSADIHYQVIVDCKAGKAEYKPR</sequence>
<name>YEBF_SALA4</name>
<comment type="subcellular location">
    <subcellularLocation>
        <location evidence="1">Secreted</location>
    </subcellularLocation>
</comment>
<comment type="similarity">
    <text evidence="1">Belongs to the YebF family.</text>
</comment>
<evidence type="ECO:0000255" key="1">
    <source>
        <dbReference type="HAMAP-Rule" id="MF_01435"/>
    </source>
</evidence>
<evidence type="ECO:0000255" key="2">
    <source>
        <dbReference type="PROSITE-ProRule" id="PRU01323"/>
    </source>
</evidence>
<proteinExistence type="inferred from homology"/>
<feature type="signal peptide" evidence="1">
    <location>
        <begin position="1"/>
        <end position="21"/>
    </location>
</feature>
<feature type="chain" id="PRO_1000145836" description="Protein YebF">
    <location>
        <begin position="22"/>
        <end position="117"/>
    </location>
</feature>
<feature type="domain" description="YebF/Cmi" evidence="2">
    <location>
        <begin position="30"/>
        <end position="117"/>
    </location>
</feature>
<feature type="disulfide bond" evidence="2">
    <location>
        <begin position="34"/>
        <end position="107"/>
    </location>
</feature>
<organism>
    <name type="scientific">Salmonella agona (strain SL483)</name>
    <dbReference type="NCBI Taxonomy" id="454166"/>
    <lineage>
        <taxon>Bacteria</taxon>
        <taxon>Pseudomonadati</taxon>
        <taxon>Pseudomonadota</taxon>
        <taxon>Gammaproteobacteria</taxon>
        <taxon>Enterobacterales</taxon>
        <taxon>Enterobacteriaceae</taxon>
        <taxon>Salmonella</taxon>
    </lineage>
</organism>
<protein>
    <recommendedName>
        <fullName evidence="1">Protein YebF</fullName>
    </recommendedName>
</protein>
<keyword id="KW-1015">Disulfide bond</keyword>
<keyword id="KW-0964">Secreted</keyword>
<keyword id="KW-0732">Signal</keyword>
<accession>B5F3L0</accession>
<reference key="1">
    <citation type="journal article" date="2011" name="J. Bacteriol.">
        <title>Comparative genomics of 28 Salmonella enterica isolates: evidence for CRISPR-mediated adaptive sublineage evolution.</title>
        <authorList>
            <person name="Fricke W.F."/>
            <person name="Mammel M.K."/>
            <person name="McDermott P.F."/>
            <person name="Tartera C."/>
            <person name="White D.G."/>
            <person name="Leclerc J.E."/>
            <person name="Ravel J."/>
            <person name="Cebula T.A."/>
        </authorList>
    </citation>
    <scope>NUCLEOTIDE SEQUENCE [LARGE SCALE GENOMIC DNA]</scope>
    <source>
        <strain>SL483</strain>
    </source>
</reference>